<dbReference type="EC" id="2.3.1.89" evidence="1"/>
<dbReference type="EMBL" id="BA000043">
    <property type="protein sequence ID" value="BAD75334.1"/>
    <property type="molecule type" value="Genomic_DNA"/>
</dbReference>
<dbReference type="SMR" id="Q5L146"/>
<dbReference type="STRING" id="235909.GK1049"/>
<dbReference type="KEGG" id="gka:GK1049"/>
<dbReference type="eggNOG" id="COG2171">
    <property type="taxonomic scope" value="Bacteria"/>
</dbReference>
<dbReference type="HOGENOM" id="CLU_103751_0_0_9"/>
<dbReference type="UniPathway" id="UPA00034">
    <property type="reaction ID" value="UER00022"/>
</dbReference>
<dbReference type="Proteomes" id="UP000001172">
    <property type="component" value="Chromosome"/>
</dbReference>
<dbReference type="GO" id="GO:0047200">
    <property type="term" value="F:tetrahydrodipicolinate N-acetyltransferase activity"/>
    <property type="evidence" value="ECO:0007669"/>
    <property type="project" value="UniProtKB-EC"/>
</dbReference>
<dbReference type="GO" id="GO:0019877">
    <property type="term" value="P:diaminopimelate biosynthetic process"/>
    <property type="evidence" value="ECO:0007669"/>
    <property type="project" value="UniProtKB-UniRule"/>
</dbReference>
<dbReference type="GO" id="GO:0009089">
    <property type="term" value="P:lysine biosynthetic process via diaminopimelate"/>
    <property type="evidence" value="ECO:0007669"/>
    <property type="project" value="UniProtKB-UniRule"/>
</dbReference>
<dbReference type="CDD" id="cd03350">
    <property type="entry name" value="LbH_THP_succinylT"/>
    <property type="match status" value="1"/>
</dbReference>
<dbReference type="Gene3D" id="2.160.10.10">
    <property type="entry name" value="Hexapeptide repeat proteins"/>
    <property type="match status" value="1"/>
</dbReference>
<dbReference type="Gene3D" id="3.30.70.250">
    <property type="entry name" value="Malonyl-CoA ACP transacylase, ACP-binding"/>
    <property type="match status" value="1"/>
</dbReference>
<dbReference type="HAMAP" id="MF_01691">
    <property type="entry name" value="DapH"/>
    <property type="match status" value="1"/>
</dbReference>
<dbReference type="InterPro" id="IPR019873">
    <property type="entry name" value="DapH"/>
</dbReference>
<dbReference type="InterPro" id="IPR013710">
    <property type="entry name" value="DapH_N"/>
</dbReference>
<dbReference type="InterPro" id="IPR001451">
    <property type="entry name" value="Hexapep"/>
</dbReference>
<dbReference type="InterPro" id="IPR018357">
    <property type="entry name" value="Hexapep_transf_CS"/>
</dbReference>
<dbReference type="InterPro" id="IPR050179">
    <property type="entry name" value="Trans_hexapeptide_repeat"/>
</dbReference>
<dbReference type="InterPro" id="IPR011004">
    <property type="entry name" value="Trimer_LpxA-like_sf"/>
</dbReference>
<dbReference type="NCBIfam" id="TIGR03532">
    <property type="entry name" value="DapD_Ac"/>
    <property type="match status" value="1"/>
</dbReference>
<dbReference type="PANTHER" id="PTHR43300:SF10">
    <property type="entry name" value="2,3,4,5-TETRAHYDROPYRIDINE-2,6-DICARBOXYLATE N-ACETYLTRANSFERASE"/>
    <property type="match status" value="1"/>
</dbReference>
<dbReference type="PANTHER" id="PTHR43300">
    <property type="entry name" value="ACETYLTRANSFERASE"/>
    <property type="match status" value="1"/>
</dbReference>
<dbReference type="Pfam" id="PF08503">
    <property type="entry name" value="DapH_N"/>
    <property type="match status" value="1"/>
</dbReference>
<dbReference type="Pfam" id="PF00132">
    <property type="entry name" value="Hexapep"/>
    <property type="match status" value="1"/>
</dbReference>
<dbReference type="Pfam" id="PF14602">
    <property type="entry name" value="Hexapep_2"/>
    <property type="match status" value="2"/>
</dbReference>
<dbReference type="SUPFAM" id="SSF51161">
    <property type="entry name" value="Trimeric LpxA-like enzymes"/>
    <property type="match status" value="1"/>
</dbReference>
<dbReference type="PROSITE" id="PS00101">
    <property type="entry name" value="HEXAPEP_TRANSFERASES"/>
    <property type="match status" value="1"/>
</dbReference>
<protein>
    <recommendedName>
        <fullName evidence="1">2,3,4,5-tetrahydropyridine-2,6-dicarboxylate N-acetyltransferase</fullName>
        <ecNumber evidence="1">2.3.1.89</ecNumber>
    </recommendedName>
    <alternativeName>
        <fullName evidence="1">Tetrahydrodipicolinate N-acetyltransferase</fullName>
        <shortName evidence="1">THP acetyltransferase</shortName>
        <shortName evidence="1">Tetrahydropicolinate acetylase</shortName>
    </alternativeName>
</protein>
<proteinExistence type="inferred from homology"/>
<keyword id="KW-0012">Acyltransferase</keyword>
<keyword id="KW-0028">Amino-acid biosynthesis</keyword>
<keyword id="KW-0220">Diaminopimelate biosynthesis</keyword>
<keyword id="KW-0457">Lysine biosynthesis</keyword>
<keyword id="KW-1185">Reference proteome</keyword>
<keyword id="KW-0677">Repeat</keyword>
<keyword id="KW-0808">Transferase</keyword>
<sequence>MKMMDANEIISFIQNSKKSTPVKVYIKGDLEGIDFGSSAKTFITGNVGVVFGEWQDIQAAIEANQDKIEDYVVENDRRNSAIPLLDLKGIKARIEPGAIIRDHVEIGDNAVIMMGAVINIGAVVGEGTMIDMNAVLGGRATVGKNCHIGAGAVLAGVIEPPSAKPVVIEDDVLVGANAVILEGVTVGKGAVVAAGAVVVEDVPPYTVVAGVPARVIKQIDEQTRAKTEIKQELRQL</sequence>
<reference key="1">
    <citation type="journal article" date="2004" name="Nucleic Acids Res.">
        <title>Thermoadaptation trait revealed by the genome sequence of thermophilic Geobacillus kaustophilus.</title>
        <authorList>
            <person name="Takami H."/>
            <person name="Takaki Y."/>
            <person name="Chee G.-J."/>
            <person name="Nishi S."/>
            <person name="Shimamura S."/>
            <person name="Suzuki H."/>
            <person name="Matsui S."/>
            <person name="Uchiyama I."/>
        </authorList>
    </citation>
    <scope>NUCLEOTIDE SEQUENCE [LARGE SCALE GENOMIC DNA]</scope>
    <source>
        <strain>HTA426</strain>
    </source>
</reference>
<name>DAPH_GEOKA</name>
<feature type="chain" id="PRO_0000376659" description="2,3,4,5-tetrahydropyridine-2,6-dicarboxylate N-acetyltransferase">
    <location>
        <begin position="1"/>
        <end position="236"/>
    </location>
</feature>
<accession>Q5L146</accession>
<evidence type="ECO:0000255" key="1">
    <source>
        <dbReference type="HAMAP-Rule" id="MF_01691"/>
    </source>
</evidence>
<gene>
    <name evidence="1" type="primary">dapH</name>
    <name type="ordered locus">GK1049</name>
</gene>
<organism>
    <name type="scientific">Geobacillus kaustophilus (strain HTA426)</name>
    <dbReference type="NCBI Taxonomy" id="235909"/>
    <lineage>
        <taxon>Bacteria</taxon>
        <taxon>Bacillati</taxon>
        <taxon>Bacillota</taxon>
        <taxon>Bacilli</taxon>
        <taxon>Bacillales</taxon>
        <taxon>Anoxybacillaceae</taxon>
        <taxon>Geobacillus</taxon>
        <taxon>Geobacillus thermoleovorans group</taxon>
    </lineage>
</organism>
<comment type="function">
    <text evidence="1">Catalyzes the transfer of an acetyl group from acetyl-CoA to tetrahydrodipicolinate.</text>
</comment>
<comment type="catalytic activity">
    <reaction evidence="1">
        <text>(S)-2,3,4,5-tetrahydrodipicolinate + acetyl-CoA + H2O = L-2-acetamido-6-oxoheptanedioate + CoA</text>
        <dbReference type="Rhea" id="RHEA:13085"/>
        <dbReference type="ChEBI" id="CHEBI:15377"/>
        <dbReference type="ChEBI" id="CHEBI:16845"/>
        <dbReference type="ChEBI" id="CHEBI:57287"/>
        <dbReference type="ChEBI" id="CHEBI:57288"/>
        <dbReference type="ChEBI" id="CHEBI:58117"/>
        <dbReference type="EC" id="2.3.1.89"/>
    </reaction>
</comment>
<comment type="pathway">
    <text evidence="1">Amino-acid biosynthesis; L-lysine biosynthesis via DAP pathway; LL-2,6-diaminopimelate from (S)-tetrahydrodipicolinate (acetylase route): step 1/3.</text>
</comment>
<comment type="similarity">
    <text evidence="1">Belongs to the transferase hexapeptide repeat family. DapH subfamily.</text>
</comment>